<keyword id="KW-0150">Chloroplast</keyword>
<keyword id="KW-0934">Plastid</keyword>
<keyword id="KW-0687">Ribonucleoprotein</keyword>
<keyword id="KW-0689">Ribosomal protein</keyword>
<evidence type="ECO:0000250" key="1"/>
<evidence type="ECO:0000256" key="2">
    <source>
        <dbReference type="SAM" id="MobiDB-lite"/>
    </source>
</evidence>
<evidence type="ECO:0000305" key="3"/>
<comment type="subcellular location">
    <subcellularLocation>
        <location>Plastid</location>
        <location>Chloroplast</location>
    </subcellularLocation>
</comment>
<comment type="similarity">
    <text evidence="3">Belongs to the bacterial ribosomal protein bL32 family.</text>
</comment>
<reference key="1">
    <citation type="journal article" date="2000" name="J. Mol. Evol.">
        <title>The structure and gene repertoire of an ancient red algal plastid genome.</title>
        <authorList>
            <person name="Gloeckner G."/>
            <person name="Rosenthal A."/>
            <person name="Valentin K.-U."/>
        </authorList>
    </citation>
    <scope>NUCLEOTIDE SEQUENCE [LARGE SCALE GENOMIC DNA]</scope>
    <source>
        <strain>RK-1</strain>
    </source>
</reference>
<dbReference type="EMBL" id="AF022186">
    <property type="protein sequence ID" value="AAB82695.1"/>
    <property type="molecule type" value="Genomic_DNA"/>
</dbReference>
<dbReference type="PIR" id="T11962">
    <property type="entry name" value="T11962"/>
</dbReference>
<dbReference type="RefSeq" id="NP_045066.1">
    <property type="nucleotide sequence ID" value="NC_001840.1"/>
</dbReference>
<dbReference type="SMR" id="O19894"/>
<dbReference type="GeneID" id="800187"/>
<dbReference type="GO" id="GO:0009507">
    <property type="term" value="C:chloroplast"/>
    <property type="evidence" value="ECO:0007669"/>
    <property type="project" value="UniProtKB-SubCell"/>
</dbReference>
<dbReference type="GO" id="GO:0015934">
    <property type="term" value="C:large ribosomal subunit"/>
    <property type="evidence" value="ECO:0007669"/>
    <property type="project" value="InterPro"/>
</dbReference>
<dbReference type="GO" id="GO:0003735">
    <property type="term" value="F:structural constituent of ribosome"/>
    <property type="evidence" value="ECO:0007669"/>
    <property type="project" value="InterPro"/>
</dbReference>
<dbReference type="GO" id="GO:0006412">
    <property type="term" value="P:translation"/>
    <property type="evidence" value="ECO:0007669"/>
    <property type="project" value="UniProtKB-UniRule"/>
</dbReference>
<dbReference type="Gene3D" id="1.20.5.640">
    <property type="entry name" value="Single helix bin"/>
    <property type="match status" value="1"/>
</dbReference>
<dbReference type="HAMAP" id="MF_00340">
    <property type="entry name" value="Ribosomal_bL32"/>
    <property type="match status" value="1"/>
</dbReference>
<dbReference type="InterPro" id="IPR002677">
    <property type="entry name" value="Ribosomal_bL32"/>
</dbReference>
<dbReference type="InterPro" id="IPR011332">
    <property type="entry name" value="Ribosomal_zn-bd"/>
</dbReference>
<dbReference type="NCBIfam" id="TIGR01031">
    <property type="entry name" value="rpmF_bact"/>
    <property type="match status" value="1"/>
</dbReference>
<dbReference type="Pfam" id="PF01783">
    <property type="entry name" value="Ribosomal_L32p"/>
    <property type="match status" value="1"/>
</dbReference>
<dbReference type="SUPFAM" id="SSF57829">
    <property type="entry name" value="Zn-binding ribosomal proteins"/>
    <property type="match status" value="1"/>
</dbReference>
<protein>
    <recommendedName>
        <fullName evidence="3">Large ribosomal subunit protein bL32c</fullName>
    </recommendedName>
    <alternativeName>
        <fullName>50S ribosomal protein L32, chloroplastic</fullName>
    </alternativeName>
</protein>
<gene>
    <name type="primary">rpl32</name>
</gene>
<sequence>MAVPKKRTSKSKKKSRRSHWINKAKTRIRNFLNLAKSISNKKATSFAYSTIKN</sequence>
<proteinExistence type="inferred from homology"/>
<name>RK32_CYACA</name>
<accession>O19894</accession>
<geneLocation type="chloroplast"/>
<feature type="initiator methionine" description="Removed" evidence="1">
    <location>
        <position position="1"/>
    </location>
</feature>
<feature type="chain" id="PRO_0000172454" description="Large ribosomal subunit protein bL32c">
    <location>
        <begin position="2"/>
        <end position="53"/>
    </location>
</feature>
<feature type="region of interest" description="Disordered" evidence="2">
    <location>
        <begin position="1"/>
        <end position="21"/>
    </location>
</feature>
<organism>
    <name type="scientific">Cyanidium caldarium</name>
    <name type="common">Red alga</name>
    <dbReference type="NCBI Taxonomy" id="2771"/>
    <lineage>
        <taxon>Eukaryota</taxon>
        <taxon>Rhodophyta</taxon>
        <taxon>Bangiophyceae</taxon>
        <taxon>Cyanidiales</taxon>
        <taxon>Cyanidiaceae</taxon>
        <taxon>Cyanidium</taxon>
    </lineage>
</organism>